<comment type="function">
    <text evidence="1">Catalyzes the anti-1,4-elimination of the C-3 phosphate and the C-6 proR hydrogen from 5-enolpyruvylshikimate-3-phosphate (EPSP) to yield chorismate, which is the branch point compound that serves as the starting substrate for the three terminal pathways of aromatic amino acid biosynthesis. This reaction introduces a second double bond into the aromatic ring system.</text>
</comment>
<comment type="catalytic activity">
    <reaction evidence="1">
        <text>5-O-(1-carboxyvinyl)-3-phosphoshikimate = chorismate + phosphate</text>
        <dbReference type="Rhea" id="RHEA:21020"/>
        <dbReference type="ChEBI" id="CHEBI:29748"/>
        <dbReference type="ChEBI" id="CHEBI:43474"/>
        <dbReference type="ChEBI" id="CHEBI:57701"/>
        <dbReference type="EC" id="4.2.3.5"/>
    </reaction>
</comment>
<comment type="cofactor">
    <cofactor evidence="1">
        <name>FMNH2</name>
        <dbReference type="ChEBI" id="CHEBI:57618"/>
    </cofactor>
    <text evidence="1">Reduced FMN (FMNH(2)).</text>
</comment>
<comment type="pathway">
    <text evidence="1">Metabolic intermediate biosynthesis; chorismate biosynthesis; chorismate from D-erythrose 4-phosphate and phosphoenolpyruvate: step 7/7.</text>
</comment>
<comment type="subunit">
    <text evidence="1">Homotetramer.</text>
</comment>
<comment type="similarity">
    <text evidence="1">Belongs to the chorismate synthase family.</text>
</comment>
<sequence length="388" mass="42872">MRYLTAGESHGPRLTAIIEGIPAGLPLTAEDINEDLRRRQGGYGRGGRMKIENDQVVFTSGVRHGKTTGAPITMDVINKDHQKWLDIMSAEDIEDRLKSKRKITHPRPGHADLVGGIKYRFDDLRNSLERSSARETTMRVAVGAVAKRLLAELDMEIANHVVVFGGKEIDVPENLTVAEIKQRAAQSEVSIVNQEREQEIKDYIDQIKRDGDTIGGVVETVVGGVPVGLGSYVQWDRKLDARLAQAVVSINAFKGVEFGLGFEAGYRKGSQVMDEILWSKEDGYTRRTNNLGGFEGGMTNGQPIVVRGVMKPIPTLYKPLMSVDIETHEPYKATVERSDPTALPAAGMVMEAVVATVLAQEILEKFSSDNLEELKEAVAKHRDYTKNY</sequence>
<accession>C1CQY1</accession>
<proteinExistence type="inferred from homology"/>
<protein>
    <recommendedName>
        <fullName evidence="1">Chorismate synthase</fullName>
        <shortName evidence="1">CS</shortName>
        <ecNumber evidence="1">4.2.3.5</ecNumber>
    </recommendedName>
    <alternativeName>
        <fullName evidence="1">5-enolpyruvylshikimate-3-phosphate phospholyase</fullName>
    </alternativeName>
</protein>
<organism>
    <name type="scientific">Streptococcus pneumoniae (strain Taiwan19F-14)</name>
    <dbReference type="NCBI Taxonomy" id="487213"/>
    <lineage>
        <taxon>Bacteria</taxon>
        <taxon>Bacillati</taxon>
        <taxon>Bacillota</taxon>
        <taxon>Bacilli</taxon>
        <taxon>Lactobacillales</taxon>
        <taxon>Streptococcaceae</taxon>
        <taxon>Streptococcus</taxon>
    </lineage>
</organism>
<feature type="chain" id="PRO_1000132794" description="Chorismate synthase">
    <location>
        <begin position="1"/>
        <end position="388"/>
    </location>
</feature>
<feature type="binding site" evidence="1">
    <location>
        <position position="39"/>
    </location>
    <ligand>
        <name>NADP(+)</name>
        <dbReference type="ChEBI" id="CHEBI:58349"/>
    </ligand>
</feature>
<feature type="binding site" evidence="1">
    <location>
        <position position="45"/>
    </location>
    <ligand>
        <name>NADP(+)</name>
        <dbReference type="ChEBI" id="CHEBI:58349"/>
    </ligand>
</feature>
<feature type="binding site" evidence="1">
    <location>
        <begin position="130"/>
        <end position="132"/>
    </location>
    <ligand>
        <name>FMN</name>
        <dbReference type="ChEBI" id="CHEBI:58210"/>
    </ligand>
</feature>
<feature type="binding site" evidence="1">
    <location>
        <begin position="251"/>
        <end position="252"/>
    </location>
    <ligand>
        <name>FMN</name>
        <dbReference type="ChEBI" id="CHEBI:58210"/>
    </ligand>
</feature>
<feature type="binding site" evidence="1">
    <location>
        <position position="296"/>
    </location>
    <ligand>
        <name>FMN</name>
        <dbReference type="ChEBI" id="CHEBI:58210"/>
    </ligand>
</feature>
<feature type="binding site" evidence="1">
    <location>
        <begin position="311"/>
        <end position="315"/>
    </location>
    <ligand>
        <name>FMN</name>
        <dbReference type="ChEBI" id="CHEBI:58210"/>
    </ligand>
</feature>
<feature type="binding site" evidence="1">
    <location>
        <position position="337"/>
    </location>
    <ligand>
        <name>FMN</name>
        <dbReference type="ChEBI" id="CHEBI:58210"/>
    </ligand>
</feature>
<dbReference type="EC" id="4.2.3.5" evidence="1"/>
<dbReference type="EMBL" id="CP000921">
    <property type="protein sequence ID" value="ACO23767.1"/>
    <property type="molecule type" value="Genomic_DNA"/>
</dbReference>
<dbReference type="RefSeq" id="WP_001269860.1">
    <property type="nucleotide sequence ID" value="NC_012469.1"/>
</dbReference>
<dbReference type="SMR" id="C1CQY1"/>
<dbReference type="KEGG" id="snt:SPT_0899"/>
<dbReference type="HOGENOM" id="CLU_034547_2_0_9"/>
<dbReference type="UniPathway" id="UPA00053">
    <property type="reaction ID" value="UER00090"/>
</dbReference>
<dbReference type="GO" id="GO:0005829">
    <property type="term" value="C:cytosol"/>
    <property type="evidence" value="ECO:0007669"/>
    <property type="project" value="TreeGrafter"/>
</dbReference>
<dbReference type="GO" id="GO:0004107">
    <property type="term" value="F:chorismate synthase activity"/>
    <property type="evidence" value="ECO:0007669"/>
    <property type="project" value="UniProtKB-UniRule"/>
</dbReference>
<dbReference type="GO" id="GO:0010181">
    <property type="term" value="F:FMN binding"/>
    <property type="evidence" value="ECO:0007669"/>
    <property type="project" value="TreeGrafter"/>
</dbReference>
<dbReference type="GO" id="GO:0008652">
    <property type="term" value="P:amino acid biosynthetic process"/>
    <property type="evidence" value="ECO:0007669"/>
    <property type="project" value="UniProtKB-KW"/>
</dbReference>
<dbReference type="GO" id="GO:0009073">
    <property type="term" value="P:aromatic amino acid family biosynthetic process"/>
    <property type="evidence" value="ECO:0007669"/>
    <property type="project" value="UniProtKB-KW"/>
</dbReference>
<dbReference type="GO" id="GO:0009423">
    <property type="term" value="P:chorismate biosynthetic process"/>
    <property type="evidence" value="ECO:0007669"/>
    <property type="project" value="UniProtKB-UniRule"/>
</dbReference>
<dbReference type="CDD" id="cd07304">
    <property type="entry name" value="Chorismate_synthase"/>
    <property type="match status" value="1"/>
</dbReference>
<dbReference type="FunFam" id="3.60.150.10:FF:000002">
    <property type="entry name" value="Chorismate synthase"/>
    <property type="match status" value="1"/>
</dbReference>
<dbReference type="Gene3D" id="3.60.150.10">
    <property type="entry name" value="Chorismate synthase AroC"/>
    <property type="match status" value="1"/>
</dbReference>
<dbReference type="HAMAP" id="MF_00300">
    <property type="entry name" value="Chorismate_synth"/>
    <property type="match status" value="1"/>
</dbReference>
<dbReference type="InterPro" id="IPR000453">
    <property type="entry name" value="Chorismate_synth"/>
</dbReference>
<dbReference type="InterPro" id="IPR035904">
    <property type="entry name" value="Chorismate_synth_AroC_sf"/>
</dbReference>
<dbReference type="InterPro" id="IPR020541">
    <property type="entry name" value="Chorismate_synthase_CS"/>
</dbReference>
<dbReference type="NCBIfam" id="TIGR00033">
    <property type="entry name" value="aroC"/>
    <property type="match status" value="1"/>
</dbReference>
<dbReference type="NCBIfam" id="NF003793">
    <property type="entry name" value="PRK05382.1"/>
    <property type="match status" value="1"/>
</dbReference>
<dbReference type="PANTHER" id="PTHR21085">
    <property type="entry name" value="CHORISMATE SYNTHASE"/>
    <property type="match status" value="1"/>
</dbReference>
<dbReference type="PANTHER" id="PTHR21085:SF0">
    <property type="entry name" value="CHORISMATE SYNTHASE"/>
    <property type="match status" value="1"/>
</dbReference>
<dbReference type="Pfam" id="PF01264">
    <property type="entry name" value="Chorismate_synt"/>
    <property type="match status" value="1"/>
</dbReference>
<dbReference type="PIRSF" id="PIRSF001456">
    <property type="entry name" value="Chorismate_synth"/>
    <property type="match status" value="1"/>
</dbReference>
<dbReference type="SUPFAM" id="SSF103263">
    <property type="entry name" value="Chorismate synthase, AroC"/>
    <property type="match status" value="1"/>
</dbReference>
<dbReference type="PROSITE" id="PS00787">
    <property type="entry name" value="CHORISMATE_SYNTHASE_1"/>
    <property type="match status" value="1"/>
</dbReference>
<dbReference type="PROSITE" id="PS00788">
    <property type="entry name" value="CHORISMATE_SYNTHASE_2"/>
    <property type="match status" value="1"/>
</dbReference>
<dbReference type="PROSITE" id="PS00789">
    <property type="entry name" value="CHORISMATE_SYNTHASE_3"/>
    <property type="match status" value="1"/>
</dbReference>
<evidence type="ECO:0000255" key="1">
    <source>
        <dbReference type="HAMAP-Rule" id="MF_00300"/>
    </source>
</evidence>
<name>AROC_STRZT</name>
<gene>
    <name evidence="1" type="primary">aroC</name>
    <name type="ordered locus">SPT_0899</name>
</gene>
<keyword id="KW-0028">Amino-acid biosynthesis</keyword>
<keyword id="KW-0057">Aromatic amino acid biosynthesis</keyword>
<keyword id="KW-0274">FAD</keyword>
<keyword id="KW-0285">Flavoprotein</keyword>
<keyword id="KW-0288">FMN</keyword>
<keyword id="KW-0456">Lyase</keyword>
<keyword id="KW-0521">NADP</keyword>
<reference key="1">
    <citation type="journal article" date="2010" name="Genome Biol.">
        <title>Structure and dynamics of the pan-genome of Streptococcus pneumoniae and closely related species.</title>
        <authorList>
            <person name="Donati C."/>
            <person name="Hiller N.L."/>
            <person name="Tettelin H."/>
            <person name="Muzzi A."/>
            <person name="Croucher N.J."/>
            <person name="Angiuoli S.V."/>
            <person name="Oggioni M."/>
            <person name="Dunning Hotopp J.C."/>
            <person name="Hu F.Z."/>
            <person name="Riley D.R."/>
            <person name="Covacci A."/>
            <person name="Mitchell T.J."/>
            <person name="Bentley S.D."/>
            <person name="Kilian M."/>
            <person name="Ehrlich G.D."/>
            <person name="Rappuoli R."/>
            <person name="Moxon E.R."/>
            <person name="Masignani V."/>
        </authorList>
    </citation>
    <scope>NUCLEOTIDE SEQUENCE [LARGE SCALE GENOMIC DNA]</scope>
    <source>
        <strain>Taiwan19F-14</strain>
    </source>
</reference>